<gene>
    <name type="primary">mapA</name>
    <name type="ordered locus">C8J_0966</name>
</gene>
<organism>
    <name type="scientific">Campylobacter jejuni subsp. jejuni serotype O:6 (strain 81116 / NCTC 11828)</name>
    <dbReference type="NCBI Taxonomy" id="407148"/>
    <lineage>
        <taxon>Bacteria</taxon>
        <taxon>Pseudomonadati</taxon>
        <taxon>Campylobacterota</taxon>
        <taxon>Epsilonproteobacteria</taxon>
        <taxon>Campylobacterales</taxon>
        <taxon>Campylobacteraceae</taxon>
        <taxon>Campylobacter</taxon>
    </lineage>
</organism>
<comment type="subcellular location">
    <subcellularLocation>
        <location evidence="1">Cell outer membrane</location>
        <topology evidence="1">Lipid-anchor</topology>
    </subcellularLocation>
</comment>
<keyword id="KW-0998">Cell outer membrane</keyword>
<keyword id="KW-0449">Lipoprotein</keyword>
<keyword id="KW-0472">Membrane</keyword>
<keyword id="KW-0564">Palmitate</keyword>
<keyword id="KW-0732">Signal</keyword>
<evidence type="ECO:0000305" key="1"/>
<sequence>MFKKFLIFIVPILFLSACATKQDTFAQVNQISKNSQCSSCESPGGFEAKIKGLLYISDVGIQCCANKRTLDTGIALKKVYLHRFYDLKEGQKVLNAKGKKLFVDVNFNAVFYTYLKQELEARGIVVLDNNDQNSPYVSKIDLEFISYGATQDAIGLHSKLVGVLQVSDINKNKKFTIRTKQDVQGFDDLKETTFYTHLLIKQMANKAASLISEL</sequence>
<proteinExistence type="predicted"/>
<reference key="1">
    <citation type="journal article" date="1995" name="J. Clin. Microbiol.">
        <title>Identification of Campylobacter jejuni on the basis of a species-specific gene that encodes a membrane protein.</title>
        <authorList>
            <person name="Stucki U."/>
            <person name="Frey J."/>
            <person name="Nicolet J."/>
            <person name="Burnens A."/>
        </authorList>
    </citation>
    <scope>NUCLEOTIDE SEQUENCE [GENOMIC DNA]</scope>
</reference>
<reference key="2">
    <citation type="journal article" date="2007" name="J. Bacteriol.">
        <title>The complete genome sequence of Campylobacter jejuni strain 81116 (NCTC11828).</title>
        <authorList>
            <person name="Pearson B.M."/>
            <person name="Gaskin D.J.H."/>
            <person name="Segers R.P.A.M."/>
            <person name="Wells J.M."/>
            <person name="Nuijten P.J.M."/>
            <person name="van Vliet A.H.M."/>
        </authorList>
    </citation>
    <scope>NUCLEOTIDE SEQUENCE [LARGE SCALE GENOMIC DNA]</scope>
    <source>
        <strain>81116 / NCTC 11828</strain>
    </source>
</reference>
<protein>
    <recommendedName>
        <fullName>Outer membrane lipoprotein MapA</fullName>
    </recommendedName>
</protein>
<dbReference type="EMBL" id="X80135">
    <property type="protein sequence ID" value="CAA56437.1"/>
    <property type="molecule type" value="Genomic_DNA"/>
</dbReference>
<dbReference type="EMBL" id="CP000814">
    <property type="protein sequence ID" value="ABV52565.1"/>
    <property type="molecule type" value="Genomic_DNA"/>
</dbReference>
<dbReference type="PIR" id="I40768">
    <property type="entry name" value="I40768"/>
</dbReference>
<dbReference type="RefSeq" id="WP_002852941.1">
    <property type="nucleotide sequence ID" value="NC_009839.1"/>
</dbReference>
<dbReference type="KEGG" id="cju:C8J_0966"/>
<dbReference type="HOGENOM" id="CLU_1286828_0_0_7"/>
<dbReference type="GO" id="GO:0009279">
    <property type="term" value="C:cell outer membrane"/>
    <property type="evidence" value="ECO:0007669"/>
    <property type="project" value="UniProtKB-SubCell"/>
</dbReference>
<dbReference type="InterPro" id="IPR053486">
    <property type="entry name" value="MapA_lipoprotein"/>
</dbReference>
<dbReference type="NCBIfam" id="NF041252">
    <property type="entry name" value="outer_memb_MapA"/>
    <property type="match status" value="1"/>
</dbReference>
<dbReference type="PROSITE" id="PS51257">
    <property type="entry name" value="PROKAR_LIPOPROTEIN"/>
    <property type="match status" value="1"/>
</dbReference>
<accession>A8FM78</accession>
<accession>Q0P9M3</accession>
<accession>Q46122</accession>
<feature type="signal peptide" evidence="1">
    <location>
        <begin position="1"/>
        <end position="17"/>
    </location>
</feature>
<feature type="chain" id="PRO_0000315385" description="Outer membrane lipoprotein MapA">
    <location>
        <begin position="18"/>
        <end position="214"/>
    </location>
</feature>
<feature type="lipid moiety-binding region" description="N-palmitoyl cysteine" evidence="1">
    <location>
        <position position="18"/>
    </location>
</feature>
<feature type="lipid moiety-binding region" description="S-diacylglycerol cysteine" evidence="1">
    <location>
        <position position="18"/>
    </location>
</feature>
<name>MAPA_CAMJ8</name>